<proteinExistence type="evidence at protein level"/>
<accession>P01098</accession>
<accession>D6VRL9</accession>
<comment type="function">
    <text evidence="3 4 6">Endogenous low-affinity ATPase inhibitor, which inhibits specifically the reverse ATPase reaction of mitochondrial F(1)F(0)-type ATP synthase (PubMed:12809520). Found to stabilize, together with STF2, a complex of intrinsic ATPase inhibitor INH1 and proton-translocating ATPase in mitochondrial membranes (PubMed:6200468). Binds directly to purified F1-ATPase (PubMed:2172220).</text>
</comment>
<comment type="subunit">
    <text evidence="2">Monomer and homodimer. Monomeric at pH 5.0 and dimeric at either pH 6.5 or 8.0. The protein aggregates increasingly strongly with increasing pH.</text>
</comment>
<comment type="subcellular location">
    <subcellularLocation>
        <location evidence="1 6">Mitochondrion</location>
    </subcellularLocation>
</comment>
<comment type="similarity">
    <text evidence="7">Belongs to the ATPase inhibitor family.</text>
</comment>
<gene>
    <name type="primary">STF1</name>
    <name type="synonym">AIS2</name>
    <name type="ordered locus">YDL130W-A</name>
    <name type="ORF">YDL130BW</name>
</gene>
<organism>
    <name type="scientific">Saccharomyces cerevisiae (strain ATCC 204508 / S288c)</name>
    <name type="common">Baker's yeast</name>
    <dbReference type="NCBI Taxonomy" id="559292"/>
    <lineage>
        <taxon>Eukaryota</taxon>
        <taxon>Fungi</taxon>
        <taxon>Dikarya</taxon>
        <taxon>Ascomycota</taxon>
        <taxon>Saccharomycotina</taxon>
        <taxon>Saccharomycetes</taxon>
        <taxon>Saccharomycetales</taxon>
        <taxon>Saccharomycetaceae</taxon>
        <taxon>Saccharomyces</taxon>
    </lineage>
</organism>
<keyword id="KW-0903">Direct protein sequencing</keyword>
<keyword id="KW-0496">Mitochondrion</keyword>
<keyword id="KW-0597">Phosphoprotein</keyword>
<keyword id="KW-1185">Reference proteome</keyword>
<keyword id="KW-0809">Transit peptide</keyword>
<name>STF1_YEAST</name>
<reference key="1">
    <citation type="journal article" date="1988" name="J. Biochem.">
        <title>Molecular cloning and expression of a gene for a factor which stabilizes formation of inhibitor-mitochondrial ATPase complex from Saccharomyces cerevisiae.</title>
        <authorList>
            <person name="Tagawa K."/>
            <person name="Imamoto F."/>
        </authorList>
    </citation>
    <scope>NUCLEOTIDE SEQUENCE [GENOMIC DNA]</scope>
</reference>
<reference key="2">
    <citation type="journal article" date="1997" name="Nature">
        <title>The nucleotide sequence of Saccharomyces cerevisiae chromosome IV.</title>
        <authorList>
            <person name="Jacq C."/>
            <person name="Alt-Moerbe J."/>
            <person name="Andre B."/>
            <person name="Arnold W."/>
            <person name="Bahr A."/>
            <person name="Ballesta J.P.G."/>
            <person name="Bargues M."/>
            <person name="Baron L."/>
            <person name="Becker A."/>
            <person name="Biteau N."/>
            <person name="Bloecker H."/>
            <person name="Blugeon C."/>
            <person name="Boskovic J."/>
            <person name="Brandt P."/>
            <person name="Brueckner M."/>
            <person name="Buitrago M.J."/>
            <person name="Coster F."/>
            <person name="Delaveau T."/>
            <person name="del Rey F."/>
            <person name="Dujon B."/>
            <person name="Eide L.G."/>
            <person name="Garcia-Cantalejo J.M."/>
            <person name="Goffeau A."/>
            <person name="Gomez-Peris A."/>
            <person name="Granotier C."/>
            <person name="Hanemann V."/>
            <person name="Hankeln T."/>
            <person name="Hoheisel J.D."/>
            <person name="Jaeger W."/>
            <person name="Jimenez A."/>
            <person name="Jonniaux J.-L."/>
            <person name="Kraemer C."/>
            <person name="Kuester H."/>
            <person name="Laamanen P."/>
            <person name="Legros Y."/>
            <person name="Louis E.J."/>
            <person name="Moeller-Rieker S."/>
            <person name="Monnet A."/>
            <person name="Moro M."/>
            <person name="Mueller-Auer S."/>
            <person name="Nussbaumer B."/>
            <person name="Paricio N."/>
            <person name="Paulin L."/>
            <person name="Perea J."/>
            <person name="Perez-Alonso M."/>
            <person name="Perez-Ortin J.E."/>
            <person name="Pohl T.M."/>
            <person name="Prydz H."/>
            <person name="Purnelle B."/>
            <person name="Rasmussen S.W."/>
            <person name="Remacha M.A."/>
            <person name="Revuelta J.L."/>
            <person name="Rieger M."/>
            <person name="Salom D."/>
            <person name="Saluz H.P."/>
            <person name="Saiz J.E."/>
            <person name="Saren A.-M."/>
            <person name="Schaefer M."/>
            <person name="Scharfe M."/>
            <person name="Schmidt E.R."/>
            <person name="Schneider C."/>
            <person name="Scholler P."/>
            <person name="Schwarz S."/>
            <person name="Soler-Mira A."/>
            <person name="Urrestarazu L.A."/>
            <person name="Verhasselt P."/>
            <person name="Vissers S."/>
            <person name="Voet M."/>
            <person name="Volckaert G."/>
            <person name="Wagner G."/>
            <person name="Wambutt R."/>
            <person name="Wedler E."/>
            <person name="Wedler H."/>
            <person name="Woelfl S."/>
            <person name="Harris D.E."/>
            <person name="Bowman S."/>
            <person name="Brown D."/>
            <person name="Churcher C.M."/>
            <person name="Connor R."/>
            <person name="Dedman K."/>
            <person name="Gentles S."/>
            <person name="Hamlin N."/>
            <person name="Hunt S."/>
            <person name="Jones L."/>
            <person name="McDonald S."/>
            <person name="Murphy L.D."/>
            <person name="Niblett D."/>
            <person name="Odell C."/>
            <person name="Oliver K."/>
            <person name="Rajandream M.A."/>
            <person name="Richards C."/>
            <person name="Shore L."/>
            <person name="Walsh S.V."/>
            <person name="Barrell B.G."/>
            <person name="Dietrich F.S."/>
            <person name="Mulligan J.T."/>
            <person name="Allen E."/>
            <person name="Araujo R."/>
            <person name="Aviles E."/>
            <person name="Berno A."/>
            <person name="Carpenter J."/>
            <person name="Chen E."/>
            <person name="Cherry J.M."/>
            <person name="Chung E."/>
            <person name="Duncan M."/>
            <person name="Hunicke-Smith S."/>
            <person name="Hyman R.W."/>
            <person name="Komp C."/>
            <person name="Lashkari D."/>
            <person name="Lew H."/>
            <person name="Lin D."/>
            <person name="Mosedale D."/>
            <person name="Nakahara K."/>
            <person name="Namath A."/>
            <person name="Oefner P."/>
            <person name="Oh C."/>
            <person name="Petel F.X."/>
            <person name="Roberts D."/>
            <person name="Schramm S."/>
            <person name="Schroeder M."/>
            <person name="Shogren T."/>
            <person name="Shroff N."/>
            <person name="Winant A."/>
            <person name="Yelton M.A."/>
            <person name="Botstein D."/>
            <person name="Davis R.W."/>
            <person name="Johnston M."/>
            <person name="Andrews S."/>
            <person name="Brinkman R."/>
            <person name="Cooper J."/>
            <person name="Ding H."/>
            <person name="Du Z."/>
            <person name="Favello A."/>
            <person name="Fulton L."/>
            <person name="Gattung S."/>
            <person name="Greco T."/>
            <person name="Hallsworth K."/>
            <person name="Hawkins J."/>
            <person name="Hillier L.W."/>
            <person name="Jier M."/>
            <person name="Johnson D."/>
            <person name="Johnston L."/>
            <person name="Kirsten J."/>
            <person name="Kucaba T."/>
            <person name="Langston Y."/>
            <person name="Latreille P."/>
            <person name="Le T."/>
            <person name="Mardis E."/>
            <person name="Menezes S."/>
            <person name="Miller N."/>
            <person name="Nhan M."/>
            <person name="Pauley A."/>
            <person name="Peluso D."/>
            <person name="Rifkin L."/>
            <person name="Riles L."/>
            <person name="Taich A."/>
            <person name="Trevaskis E."/>
            <person name="Vignati D."/>
            <person name="Wilcox L."/>
            <person name="Wohldman P."/>
            <person name="Vaudin M."/>
            <person name="Wilson R."/>
            <person name="Waterston R."/>
            <person name="Albermann K."/>
            <person name="Hani J."/>
            <person name="Heumann K."/>
            <person name="Kleine K."/>
            <person name="Mewes H.-W."/>
            <person name="Zollner A."/>
            <person name="Zaccaria P."/>
        </authorList>
    </citation>
    <scope>NUCLEOTIDE SEQUENCE [LARGE SCALE GENOMIC DNA]</scope>
    <source>
        <strain>ATCC 204508 / S288c</strain>
    </source>
</reference>
<reference key="3">
    <citation type="journal article" date="2014" name="G3 (Bethesda)">
        <title>The reference genome sequence of Saccharomyces cerevisiae: Then and now.</title>
        <authorList>
            <person name="Engel S.R."/>
            <person name="Dietrich F.S."/>
            <person name="Fisk D.G."/>
            <person name="Binkley G."/>
            <person name="Balakrishnan R."/>
            <person name="Costanzo M.C."/>
            <person name="Dwight S.S."/>
            <person name="Hitz B.C."/>
            <person name="Karra K."/>
            <person name="Nash R.S."/>
            <person name="Weng S."/>
            <person name="Wong E.D."/>
            <person name="Lloyd P."/>
            <person name="Skrzypek M.S."/>
            <person name="Miyasato S.R."/>
            <person name="Simison M."/>
            <person name="Cherry J.M."/>
        </authorList>
    </citation>
    <scope>GENOME REANNOTATION</scope>
    <source>
        <strain>ATCC 204508 / S288c</strain>
    </source>
</reference>
<reference key="4">
    <citation type="journal article" date="1983" name="J. Biochem.">
        <title>A stabilizing factor of yeast mitochondrial F1F0-ATPase-inhibitor complex: common amino acid sequence with yeast ATPase inhibitor and E. coli epsilon and bovine delta subunits.</title>
        <authorList>
            <person name="Matsubara H."/>
            <person name="Inoue K."/>
            <person name="Hashimoto T."/>
            <person name="Yoshida Y."/>
            <person name="Tagawa K."/>
        </authorList>
    </citation>
    <scope>PROTEIN SEQUENCE OF 24-86</scope>
</reference>
<reference key="5">
    <citation type="journal article" date="1984" name="J. Biochem.">
        <title>Purification and properties of factors in yeast mitochondria stabilizing the F1F0-ATPase-inhibitor complex.</title>
        <authorList>
            <person name="Hashimoto T."/>
            <person name="Yoshida Y."/>
            <person name="Tagawa K."/>
        </authorList>
    </citation>
    <scope>FUNCTION</scope>
    <scope>SUBCELLULAR LOCATION</scope>
</reference>
<reference key="6">
    <citation type="journal article" date="1990" name="J. Biochem.">
        <title>Simultaneous bindings of ATPase inhibitor and 9K protein to F1F0-ATPase in the presence of 15K protein in yeast mitochondria.</title>
        <authorList>
            <person name="Hashimoto T."/>
            <person name="Yoshida Y."/>
            <person name="Tagawa K."/>
        </authorList>
    </citation>
    <scope>FUNCTION</scope>
</reference>
<reference key="7">
    <citation type="journal article" date="2002" name="J. Biol. Chem.">
        <title>Formation of the yeast F1F0-ATP synthase dimeric complex does not require the ATPase inhibitor protein, Inh1.</title>
        <authorList>
            <person name="Dienhart M."/>
            <person name="Pfeiffer K."/>
            <person name="Schagger H."/>
            <person name="Stuart R.A."/>
        </authorList>
    </citation>
    <scope>SUBCELLULAR LOCATION</scope>
</reference>
<reference key="8">
    <citation type="journal article" date="2002" name="J. Biol. Chem.">
        <title>Homologous and heterologous inhibitory effects of ATPase inhibitor proteins on F-ATPases.</title>
        <authorList>
            <person name="Cabezon E."/>
            <person name="Butler P.J."/>
            <person name="Runswick M.J."/>
            <person name="Carbajo R.J."/>
            <person name="Walker J.E."/>
        </authorList>
    </citation>
    <scope>SUBUNIT</scope>
</reference>
<reference key="9">
    <citation type="journal article" date="2003" name="Biochemistry">
        <title>Investigation of the role and mechanism of IF1 and STF1 proteins, twin inhibitory peptides which interact with the yeast mitochondrial ATP synthase.</title>
        <authorList>
            <person name="Venard R."/>
            <person name="Brethes D."/>
            <person name="Giraud M.F."/>
            <person name="Vaillier J."/>
            <person name="Velours J."/>
            <person name="Haraux F."/>
        </authorList>
    </citation>
    <scope>FUNCTION</scope>
</reference>
<reference key="10">
    <citation type="journal article" date="2008" name="Mol. Cell. Proteomics">
        <title>A multidimensional chromatography technology for in-depth phosphoproteome analysis.</title>
        <authorList>
            <person name="Albuquerque C.P."/>
            <person name="Smolka M.B."/>
            <person name="Payne S.H."/>
            <person name="Bafna V."/>
            <person name="Eng J."/>
            <person name="Zhou H."/>
        </authorList>
    </citation>
    <scope>PHOSPHORYLATION [LARGE SCALE ANALYSIS] AT SER-24</scope>
    <scope>IDENTIFICATION BY MASS SPECTROMETRY [LARGE SCALE ANALYSIS]</scope>
</reference>
<sequence length="86" mass="10062">MLNRCISRNTRLPVNLRIASRFYSDGPLGGAGPGNPQDIFIKRERAKEDYYARQQEREQLAHVKEQLKEHKKKLENLENKINNLSK</sequence>
<dbReference type="EMBL" id="D00347">
    <property type="protein sequence ID" value="BAA00256.1"/>
    <property type="molecule type" value="Genomic_DNA"/>
</dbReference>
<dbReference type="EMBL" id="Z74178">
    <property type="protein sequence ID" value="CAA98699.1"/>
    <property type="molecule type" value="Genomic_DNA"/>
</dbReference>
<dbReference type="EMBL" id="Z74179">
    <property type="protein sequence ID" value="CAA98701.1"/>
    <property type="molecule type" value="Genomic_DNA"/>
</dbReference>
<dbReference type="EMBL" id="BK006938">
    <property type="protein sequence ID" value="DAA11729.1"/>
    <property type="molecule type" value="Genomic_DNA"/>
</dbReference>
<dbReference type="PIR" id="JX0048">
    <property type="entry name" value="IWBY9"/>
</dbReference>
<dbReference type="RefSeq" id="NP_010152.1">
    <property type="nucleotide sequence ID" value="NM_001184325.1"/>
</dbReference>
<dbReference type="SMR" id="P01098"/>
<dbReference type="BioGRID" id="31932">
    <property type="interactions" value="70"/>
</dbReference>
<dbReference type="FunCoup" id="P01098">
    <property type="interactions" value="139"/>
</dbReference>
<dbReference type="IntAct" id="P01098">
    <property type="interactions" value="1"/>
</dbReference>
<dbReference type="MINT" id="P01098"/>
<dbReference type="STRING" id="4932.YDL130W-A"/>
<dbReference type="iPTMnet" id="P01098"/>
<dbReference type="PaxDb" id="4932-YDL130W-A"/>
<dbReference type="PeptideAtlas" id="P01098"/>
<dbReference type="TopDownProteomics" id="P01098"/>
<dbReference type="EnsemblFungi" id="YDL130W-A_mRNA">
    <property type="protein sequence ID" value="YDL130W-A"/>
    <property type="gene ID" value="YDL130W-A"/>
</dbReference>
<dbReference type="GeneID" id="851426"/>
<dbReference type="KEGG" id="sce:YDL130W-A"/>
<dbReference type="AGR" id="SGD:S000007232"/>
<dbReference type="SGD" id="S000007232">
    <property type="gene designation" value="STF1"/>
</dbReference>
<dbReference type="VEuPathDB" id="FungiDB:YDL130W-A"/>
<dbReference type="eggNOG" id="ENOG502SCJG">
    <property type="taxonomic scope" value="Eukaryota"/>
</dbReference>
<dbReference type="GeneTree" id="ENSGT00940000176616"/>
<dbReference type="HOGENOM" id="CLU_145563_4_0_1"/>
<dbReference type="InParanoid" id="P01098"/>
<dbReference type="OMA" id="RCISRNT"/>
<dbReference type="OrthoDB" id="5532350at2759"/>
<dbReference type="BioCyc" id="YEAST:G3O-30085-MONOMER"/>
<dbReference type="BioGRID-ORCS" id="851426">
    <property type="hits" value="0 hits in 10 CRISPR screens"/>
</dbReference>
<dbReference type="PRO" id="PR:P01098"/>
<dbReference type="Proteomes" id="UP000002311">
    <property type="component" value="Chromosome IV"/>
</dbReference>
<dbReference type="RNAct" id="P01098">
    <property type="molecule type" value="protein"/>
</dbReference>
<dbReference type="GO" id="GO:0005739">
    <property type="term" value="C:mitochondrion"/>
    <property type="evidence" value="ECO:0000314"/>
    <property type="project" value="SGD"/>
</dbReference>
<dbReference type="GO" id="GO:0051117">
    <property type="term" value="F:ATPase binding"/>
    <property type="evidence" value="ECO:0000314"/>
    <property type="project" value="SGD"/>
</dbReference>
<dbReference type="GO" id="GO:0042030">
    <property type="term" value="F:ATPase inhibitor activity"/>
    <property type="evidence" value="ECO:0007669"/>
    <property type="project" value="InterPro"/>
</dbReference>
<dbReference type="FunFam" id="1.20.5.500:FF:000006">
    <property type="entry name" value="ATPase inhibitor, mitochondrial"/>
    <property type="match status" value="1"/>
</dbReference>
<dbReference type="Gene3D" id="1.20.5.500">
    <property type="entry name" value="Single helix bin"/>
    <property type="match status" value="1"/>
</dbReference>
<dbReference type="InterPro" id="IPR007648">
    <property type="entry name" value="ATPase_inhibitor_mt"/>
</dbReference>
<dbReference type="Pfam" id="PF04568">
    <property type="entry name" value="IATP"/>
    <property type="match status" value="1"/>
</dbReference>
<dbReference type="SUPFAM" id="SSF64602">
    <property type="entry name" value="F1 ATPase inhibitor, IF1, C-terminal domain"/>
    <property type="match status" value="1"/>
</dbReference>
<evidence type="ECO:0000269" key="1">
    <source>
    </source>
</evidence>
<evidence type="ECO:0000269" key="2">
    <source>
    </source>
</evidence>
<evidence type="ECO:0000269" key="3">
    <source>
    </source>
</evidence>
<evidence type="ECO:0000269" key="4">
    <source>
    </source>
</evidence>
<evidence type="ECO:0000269" key="5">
    <source>
    </source>
</evidence>
<evidence type="ECO:0000269" key="6">
    <source>
    </source>
</evidence>
<evidence type="ECO:0000305" key="7"/>
<evidence type="ECO:0007744" key="8">
    <source>
    </source>
</evidence>
<protein>
    <recommendedName>
        <fullName evidence="7">F(1)-ATPase inhibitor STF1, mitochondrial</fullName>
    </recommendedName>
    <alternativeName>
        <fullName evidence="7">9 kDa ATPase inhibitor complex-stabilizing factor</fullName>
        <shortName>9K</shortName>
    </alternativeName>
    <alternativeName>
        <fullName>Stabilizing factor 1</fullName>
    </alternativeName>
</protein>
<feature type="transit peptide" description="Mitochondrion" evidence="5">
    <location>
        <begin position="1"/>
        <end position="23"/>
    </location>
</feature>
<feature type="chain" id="PRO_0000002555" description="F(1)-ATPase inhibitor STF1, mitochondrial">
    <location>
        <begin position="24"/>
        <end position="86"/>
    </location>
</feature>
<feature type="modified residue" description="Phosphoserine" evidence="8">
    <location>
        <position position="24"/>
    </location>
</feature>